<keyword id="KW-0963">Cytoplasm</keyword>
<keyword id="KW-0441">Lipid A biosynthesis</keyword>
<keyword id="KW-0444">Lipid biosynthesis</keyword>
<keyword id="KW-0443">Lipid metabolism</keyword>
<keyword id="KW-0456">Lyase</keyword>
<feature type="chain" id="PRO_0000340797" description="3-hydroxyacyl-[acyl-carrier-protein] dehydratase FabZ">
    <location>
        <begin position="1"/>
        <end position="143"/>
    </location>
</feature>
<feature type="active site" evidence="1">
    <location>
        <position position="47"/>
    </location>
</feature>
<proteinExistence type="inferred from homology"/>
<protein>
    <recommendedName>
        <fullName evidence="1">3-hydroxyacyl-[acyl-carrier-protein] dehydratase FabZ</fullName>
        <ecNumber evidence="1">4.2.1.59</ecNumber>
    </recommendedName>
    <alternativeName>
        <fullName evidence="1">(3R)-hydroxymyristoyl-[acyl-carrier-protein] dehydratase</fullName>
        <shortName evidence="1">(3R)-hydroxymyristoyl-ACP dehydrase</shortName>
    </alternativeName>
    <alternativeName>
        <fullName evidence="1">Beta-hydroxyacyl-ACP dehydratase</fullName>
    </alternativeName>
</protein>
<sequence>MDITEIMNLIPHRYPFLLVDRVLEIDLNKSILGIKNVTVNEPQFTGHFPARPVMPGVLMVEAMAQLAAILVAKSLGSTKNKEVFLMTIENSKFRRIVQPGDTMHIHTVIDQQRANVWKFSSTVKIEGEITAESKFTAMIKDKA</sequence>
<name>FABZ_RICCK</name>
<comment type="function">
    <text evidence="1">Involved in unsaturated fatty acids biosynthesis. Catalyzes the dehydration of short chain beta-hydroxyacyl-ACPs and long chain saturated and unsaturated beta-hydroxyacyl-ACPs.</text>
</comment>
<comment type="catalytic activity">
    <reaction evidence="1">
        <text>a (3R)-hydroxyacyl-[ACP] = a (2E)-enoyl-[ACP] + H2O</text>
        <dbReference type="Rhea" id="RHEA:13097"/>
        <dbReference type="Rhea" id="RHEA-COMP:9925"/>
        <dbReference type="Rhea" id="RHEA-COMP:9945"/>
        <dbReference type="ChEBI" id="CHEBI:15377"/>
        <dbReference type="ChEBI" id="CHEBI:78784"/>
        <dbReference type="ChEBI" id="CHEBI:78827"/>
        <dbReference type="EC" id="4.2.1.59"/>
    </reaction>
</comment>
<comment type="subcellular location">
    <subcellularLocation>
        <location evidence="1">Cytoplasm</location>
    </subcellularLocation>
</comment>
<comment type="similarity">
    <text evidence="1">Belongs to the thioester dehydratase family. FabZ subfamily.</text>
</comment>
<comment type="sequence caution" evidence="2">
    <conflict type="erroneous initiation">
        <sequence resource="EMBL-CDS" id="ABV72960"/>
    </conflict>
</comment>
<reference key="1">
    <citation type="submission" date="2007-09" db="EMBL/GenBank/DDBJ databases">
        <title>Complete genome sequence of Rickettsia canadensis.</title>
        <authorList>
            <person name="Madan A."/>
            <person name="Fahey J."/>
            <person name="Helton E."/>
            <person name="Ketteman M."/>
            <person name="Madan A."/>
            <person name="Rodrigues S."/>
            <person name="Sanchez A."/>
            <person name="Whiting M."/>
            <person name="Dasch G."/>
            <person name="Eremeeva M."/>
        </authorList>
    </citation>
    <scope>NUCLEOTIDE SEQUENCE [LARGE SCALE GENOMIC DNA]</scope>
    <source>
        <strain>McKiel</strain>
    </source>
</reference>
<dbReference type="EC" id="4.2.1.59" evidence="1"/>
<dbReference type="EMBL" id="CP000409">
    <property type="protein sequence ID" value="ABV72960.1"/>
    <property type="status" value="ALT_INIT"/>
    <property type="molecule type" value="Genomic_DNA"/>
</dbReference>
<dbReference type="SMR" id="A8EX77"/>
<dbReference type="STRING" id="293613.A1E_00035"/>
<dbReference type="KEGG" id="rcm:A1E_00035"/>
<dbReference type="eggNOG" id="COG0764">
    <property type="taxonomic scope" value="Bacteria"/>
</dbReference>
<dbReference type="HOGENOM" id="CLU_078912_1_2_5"/>
<dbReference type="Proteomes" id="UP000007056">
    <property type="component" value="Chromosome"/>
</dbReference>
<dbReference type="GO" id="GO:0005737">
    <property type="term" value="C:cytoplasm"/>
    <property type="evidence" value="ECO:0007669"/>
    <property type="project" value="UniProtKB-SubCell"/>
</dbReference>
<dbReference type="GO" id="GO:0016020">
    <property type="term" value="C:membrane"/>
    <property type="evidence" value="ECO:0007669"/>
    <property type="project" value="GOC"/>
</dbReference>
<dbReference type="GO" id="GO:0019171">
    <property type="term" value="F:(3R)-hydroxyacyl-[acyl-carrier-protein] dehydratase activity"/>
    <property type="evidence" value="ECO:0007669"/>
    <property type="project" value="UniProtKB-EC"/>
</dbReference>
<dbReference type="GO" id="GO:0006633">
    <property type="term" value="P:fatty acid biosynthetic process"/>
    <property type="evidence" value="ECO:0007669"/>
    <property type="project" value="UniProtKB-UniRule"/>
</dbReference>
<dbReference type="GO" id="GO:0009245">
    <property type="term" value="P:lipid A biosynthetic process"/>
    <property type="evidence" value="ECO:0007669"/>
    <property type="project" value="UniProtKB-UniRule"/>
</dbReference>
<dbReference type="CDD" id="cd01288">
    <property type="entry name" value="FabZ"/>
    <property type="match status" value="1"/>
</dbReference>
<dbReference type="FunFam" id="3.10.129.10:FF:000001">
    <property type="entry name" value="3-hydroxyacyl-[acyl-carrier-protein] dehydratase FabZ"/>
    <property type="match status" value="1"/>
</dbReference>
<dbReference type="Gene3D" id="3.10.129.10">
    <property type="entry name" value="Hotdog Thioesterase"/>
    <property type="match status" value="1"/>
</dbReference>
<dbReference type="HAMAP" id="MF_00406">
    <property type="entry name" value="FabZ"/>
    <property type="match status" value="1"/>
</dbReference>
<dbReference type="InterPro" id="IPR013114">
    <property type="entry name" value="FabA_FabZ"/>
</dbReference>
<dbReference type="InterPro" id="IPR010084">
    <property type="entry name" value="FabZ"/>
</dbReference>
<dbReference type="InterPro" id="IPR029069">
    <property type="entry name" value="HotDog_dom_sf"/>
</dbReference>
<dbReference type="NCBIfam" id="TIGR01750">
    <property type="entry name" value="fabZ"/>
    <property type="match status" value="1"/>
</dbReference>
<dbReference type="NCBIfam" id="NF000582">
    <property type="entry name" value="PRK00006.1"/>
    <property type="match status" value="1"/>
</dbReference>
<dbReference type="PANTHER" id="PTHR30272">
    <property type="entry name" value="3-HYDROXYACYL-[ACYL-CARRIER-PROTEIN] DEHYDRATASE"/>
    <property type="match status" value="1"/>
</dbReference>
<dbReference type="PANTHER" id="PTHR30272:SF1">
    <property type="entry name" value="3-HYDROXYACYL-[ACYL-CARRIER-PROTEIN] DEHYDRATASE"/>
    <property type="match status" value="1"/>
</dbReference>
<dbReference type="Pfam" id="PF07977">
    <property type="entry name" value="FabA"/>
    <property type="match status" value="1"/>
</dbReference>
<dbReference type="SUPFAM" id="SSF54637">
    <property type="entry name" value="Thioesterase/thiol ester dehydrase-isomerase"/>
    <property type="match status" value="1"/>
</dbReference>
<accession>A8EX77</accession>
<evidence type="ECO:0000255" key="1">
    <source>
        <dbReference type="HAMAP-Rule" id="MF_00406"/>
    </source>
</evidence>
<evidence type="ECO:0000305" key="2"/>
<organism>
    <name type="scientific">Rickettsia canadensis (strain McKiel)</name>
    <dbReference type="NCBI Taxonomy" id="293613"/>
    <lineage>
        <taxon>Bacteria</taxon>
        <taxon>Pseudomonadati</taxon>
        <taxon>Pseudomonadota</taxon>
        <taxon>Alphaproteobacteria</taxon>
        <taxon>Rickettsiales</taxon>
        <taxon>Rickettsiaceae</taxon>
        <taxon>Rickettsieae</taxon>
        <taxon>Rickettsia</taxon>
        <taxon>belli group</taxon>
    </lineage>
</organism>
<gene>
    <name evidence="1" type="primary">fabZ</name>
    <name type="ordered locus">A1E_00035</name>
</gene>